<gene>
    <name type="primary">gshA</name>
    <name type="synonym">gsh-I</name>
    <name type="ordered locus">b2688</name>
    <name type="ordered locus">JW2663</name>
</gene>
<reference key="1">
    <citation type="journal article" date="1986" name="Nucleic Acids Res.">
        <title>The nucleotide sequence of the gene for gamma-glutamylcysteine synthetase of Escherichia coli.</title>
        <authorList>
            <person name="Watanabe K."/>
            <person name="Yamano Y."/>
            <person name="Murata K."/>
            <person name="Kimura A."/>
        </authorList>
    </citation>
    <scope>NUCLEOTIDE SEQUENCE [GENOMIC DNA]</scope>
    <source>
        <strain>B</strain>
    </source>
</reference>
<reference key="2">
    <citation type="journal article" date="1997" name="DNA Res.">
        <title>Construction of a contiguous 874-kb sequence of the Escherichia coli-K12 genome corresponding to 50.0-68.8 min on the linkage map and analysis of its sequence features.</title>
        <authorList>
            <person name="Yamamoto Y."/>
            <person name="Aiba H."/>
            <person name="Baba T."/>
            <person name="Hayashi K."/>
            <person name="Inada T."/>
            <person name="Isono K."/>
            <person name="Itoh T."/>
            <person name="Kimura S."/>
            <person name="Kitagawa M."/>
            <person name="Makino K."/>
            <person name="Miki T."/>
            <person name="Mitsuhashi N."/>
            <person name="Mizobuchi K."/>
            <person name="Mori H."/>
            <person name="Nakade S."/>
            <person name="Nakamura Y."/>
            <person name="Nashimoto H."/>
            <person name="Oshima T."/>
            <person name="Oyama S."/>
            <person name="Saito N."/>
            <person name="Sampei G."/>
            <person name="Satoh Y."/>
            <person name="Sivasundaram S."/>
            <person name="Tagami H."/>
            <person name="Takahashi H."/>
            <person name="Takeda J."/>
            <person name="Takemoto K."/>
            <person name="Uehara K."/>
            <person name="Wada C."/>
            <person name="Yamagata S."/>
            <person name="Horiuchi T."/>
        </authorList>
    </citation>
    <scope>NUCLEOTIDE SEQUENCE [LARGE SCALE GENOMIC DNA]</scope>
    <source>
        <strain>K12 / W3110 / ATCC 27325 / DSM 5911</strain>
    </source>
</reference>
<reference key="3">
    <citation type="journal article" date="1997" name="Science">
        <title>The complete genome sequence of Escherichia coli K-12.</title>
        <authorList>
            <person name="Blattner F.R."/>
            <person name="Plunkett G. III"/>
            <person name="Bloch C.A."/>
            <person name="Perna N.T."/>
            <person name="Burland V."/>
            <person name="Riley M."/>
            <person name="Collado-Vides J."/>
            <person name="Glasner J.D."/>
            <person name="Rode C.K."/>
            <person name="Mayhew G.F."/>
            <person name="Gregor J."/>
            <person name="Davis N.W."/>
            <person name="Kirkpatrick H.A."/>
            <person name="Goeden M.A."/>
            <person name="Rose D.J."/>
            <person name="Mau B."/>
            <person name="Shao Y."/>
        </authorList>
    </citation>
    <scope>NUCLEOTIDE SEQUENCE [LARGE SCALE GENOMIC DNA]</scope>
    <source>
        <strain>K12 / MG1655 / ATCC 47076</strain>
    </source>
</reference>
<reference key="4">
    <citation type="journal article" date="2006" name="Mol. Syst. Biol.">
        <title>Highly accurate genome sequences of Escherichia coli K-12 strains MG1655 and W3110.</title>
        <authorList>
            <person name="Hayashi K."/>
            <person name="Morooka N."/>
            <person name="Yamamoto Y."/>
            <person name="Fujita K."/>
            <person name="Isono K."/>
            <person name="Choi S."/>
            <person name="Ohtsubo E."/>
            <person name="Baba T."/>
            <person name="Wanner B.L."/>
            <person name="Mori H."/>
            <person name="Horiuchi T."/>
        </authorList>
    </citation>
    <scope>NUCLEOTIDE SEQUENCE [LARGE SCALE GENOMIC DNA]</scope>
    <source>
        <strain>K12 / W3110 / ATCC 27325 / DSM 5911</strain>
    </source>
</reference>
<dbReference type="EC" id="6.3.2.2"/>
<dbReference type="EMBL" id="X03954">
    <property type="protein sequence ID" value="CAA27583.1"/>
    <property type="molecule type" value="Genomic_DNA"/>
</dbReference>
<dbReference type="EMBL" id="U00096">
    <property type="protein sequence ID" value="AAC75735.1"/>
    <property type="molecule type" value="Genomic_DNA"/>
</dbReference>
<dbReference type="EMBL" id="AP009048">
    <property type="protein sequence ID" value="BAA16555.1"/>
    <property type="molecule type" value="Genomic_DNA"/>
</dbReference>
<dbReference type="PIR" id="A65049">
    <property type="entry name" value="SYECEC"/>
</dbReference>
<dbReference type="RefSeq" id="NP_417173.1">
    <property type="nucleotide sequence ID" value="NC_000913.3"/>
</dbReference>
<dbReference type="RefSeq" id="WP_000611804.1">
    <property type="nucleotide sequence ID" value="NZ_LN832404.1"/>
</dbReference>
<dbReference type="PDB" id="1V4G">
    <property type="method" value="X-ray"/>
    <property type="resolution" value="2.50 A"/>
    <property type="chains" value="A/B/C/D=1-518"/>
</dbReference>
<dbReference type="PDB" id="1VA6">
    <property type="method" value="X-ray"/>
    <property type="resolution" value="2.10 A"/>
    <property type="chains" value="A/B=1-518"/>
</dbReference>
<dbReference type="PDB" id="2D32">
    <property type="method" value="X-ray"/>
    <property type="resolution" value="2.40 A"/>
    <property type="chains" value="A/B/C/D=1-518"/>
</dbReference>
<dbReference type="PDB" id="2D33">
    <property type="method" value="X-ray"/>
    <property type="resolution" value="2.60 A"/>
    <property type="chains" value="A/B/C/D=1-518"/>
</dbReference>
<dbReference type="PDBsum" id="1V4G"/>
<dbReference type="PDBsum" id="1VA6"/>
<dbReference type="PDBsum" id="2D32"/>
<dbReference type="PDBsum" id="2D33"/>
<dbReference type="SMR" id="P0A6W9"/>
<dbReference type="BioGRID" id="4262271">
    <property type="interactions" value="18"/>
</dbReference>
<dbReference type="BioGRID" id="849281">
    <property type="interactions" value="2"/>
</dbReference>
<dbReference type="DIP" id="DIP-48212N"/>
<dbReference type="FunCoup" id="P0A6W9">
    <property type="interactions" value="240"/>
</dbReference>
<dbReference type="IntAct" id="P0A6W9">
    <property type="interactions" value="5"/>
</dbReference>
<dbReference type="STRING" id="511145.b2688"/>
<dbReference type="DrugBank" id="DB04464">
    <property type="generic name" value="N-Formylmethionine"/>
</dbReference>
<dbReference type="jPOST" id="P0A6W9"/>
<dbReference type="PaxDb" id="511145-b2688"/>
<dbReference type="DNASU" id="944881"/>
<dbReference type="EnsemblBacteria" id="AAC75735">
    <property type="protein sequence ID" value="AAC75735"/>
    <property type="gene ID" value="b2688"/>
</dbReference>
<dbReference type="GeneID" id="944881"/>
<dbReference type="KEGG" id="ecj:JW2663"/>
<dbReference type="KEGG" id="eco:b2688"/>
<dbReference type="KEGG" id="ecoc:C3026_14800"/>
<dbReference type="PATRIC" id="fig|1411691.4.peg.4051"/>
<dbReference type="EchoBASE" id="EB0413"/>
<dbReference type="eggNOG" id="COG2918">
    <property type="taxonomic scope" value="Bacteria"/>
</dbReference>
<dbReference type="HOGENOM" id="CLU_020728_3_0_6"/>
<dbReference type="InParanoid" id="P0A6W9"/>
<dbReference type="OMA" id="TRKNWNR"/>
<dbReference type="OrthoDB" id="9803907at2"/>
<dbReference type="PhylomeDB" id="P0A6W9"/>
<dbReference type="BioCyc" id="EcoCyc:GLUTCYSLIG-MONOMER"/>
<dbReference type="BioCyc" id="MetaCyc:GLUTCYSLIG-MONOMER"/>
<dbReference type="BRENDA" id="6.3.2.2">
    <property type="organism ID" value="2026"/>
</dbReference>
<dbReference type="SABIO-RK" id="P0A6W9"/>
<dbReference type="UniPathway" id="UPA00142">
    <property type="reaction ID" value="UER00209"/>
</dbReference>
<dbReference type="EvolutionaryTrace" id="P0A6W9"/>
<dbReference type="PRO" id="PR:P0A6W9"/>
<dbReference type="Proteomes" id="UP000000625">
    <property type="component" value="Chromosome"/>
</dbReference>
<dbReference type="GO" id="GO:0005829">
    <property type="term" value="C:cytosol"/>
    <property type="evidence" value="ECO:0000314"/>
    <property type="project" value="EcoCyc"/>
</dbReference>
<dbReference type="GO" id="GO:0005524">
    <property type="term" value="F:ATP binding"/>
    <property type="evidence" value="ECO:0007669"/>
    <property type="project" value="UniProtKB-KW"/>
</dbReference>
<dbReference type="GO" id="GO:0004357">
    <property type="term" value="F:glutamate-cysteine ligase activity"/>
    <property type="evidence" value="ECO:0000314"/>
    <property type="project" value="EcoCyc"/>
</dbReference>
<dbReference type="GO" id="GO:0046872">
    <property type="term" value="F:metal ion binding"/>
    <property type="evidence" value="ECO:0000314"/>
    <property type="project" value="EcoCyc"/>
</dbReference>
<dbReference type="GO" id="GO:0071243">
    <property type="term" value="P:cellular response to arsenic-containing substance"/>
    <property type="evidence" value="ECO:0000315"/>
    <property type="project" value="EcoCyc"/>
</dbReference>
<dbReference type="GO" id="GO:0071288">
    <property type="term" value="P:cellular response to mercury ion"/>
    <property type="evidence" value="ECO:0000315"/>
    <property type="project" value="EcoCyc"/>
</dbReference>
<dbReference type="GO" id="GO:0006750">
    <property type="term" value="P:glutathione biosynthetic process"/>
    <property type="evidence" value="ECO:0000315"/>
    <property type="project" value="EcoCyc"/>
</dbReference>
<dbReference type="GO" id="GO:0006972">
    <property type="term" value="P:hyperosmotic response"/>
    <property type="evidence" value="ECO:0000315"/>
    <property type="project" value="EcoCyc"/>
</dbReference>
<dbReference type="FunFam" id="3.30.590.20:FF:000001">
    <property type="entry name" value="Glutamate--cysteine ligase"/>
    <property type="match status" value="1"/>
</dbReference>
<dbReference type="Gene3D" id="3.30.590.20">
    <property type="match status" value="1"/>
</dbReference>
<dbReference type="HAMAP" id="MF_00578">
    <property type="entry name" value="Glu_cys_ligase"/>
    <property type="match status" value="1"/>
</dbReference>
<dbReference type="InterPro" id="IPR014746">
    <property type="entry name" value="Gln_synth/guanido_kin_cat_dom"/>
</dbReference>
<dbReference type="InterPro" id="IPR007370">
    <property type="entry name" value="Glu_cys_ligase"/>
</dbReference>
<dbReference type="InterPro" id="IPR006334">
    <property type="entry name" value="Glut_cys_ligase"/>
</dbReference>
<dbReference type="NCBIfam" id="TIGR01434">
    <property type="entry name" value="glu_cys_ligase"/>
    <property type="match status" value="1"/>
</dbReference>
<dbReference type="PANTHER" id="PTHR38761">
    <property type="entry name" value="GLUTAMATE--CYSTEINE LIGASE"/>
    <property type="match status" value="1"/>
</dbReference>
<dbReference type="PANTHER" id="PTHR38761:SF1">
    <property type="entry name" value="GLUTAMATE--CYSTEINE LIGASE"/>
    <property type="match status" value="1"/>
</dbReference>
<dbReference type="Pfam" id="PF04262">
    <property type="entry name" value="Glu_cys_ligase"/>
    <property type="match status" value="1"/>
</dbReference>
<dbReference type="SUPFAM" id="SSF55931">
    <property type="entry name" value="Glutamine synthetase/guanido kinase"/>
    <property type="match status" value="1"/>
</dbReference>
<sequence length="518" mass="58269">MIPDVSQALAWLEKHPQALKGIQRGLERETLRVNADGTLATTGHPEALGSALTHKWITTDFAEALLEFITPVDGDIEHMLTFMRDLHRYTARNMGDERMWPLSMPCYIAEGQDIELAQYGTSNTGRFKTLYREGLKNRYGALMQTISGVHYNFSLPMAFWQAKCGDISGADAKEKISAGYFRVIRNYYRFGWVIPYLFGASPAICSSFLQGKPTSLPFEKTECGMYYLPYATSLRLSDLGYTNKSQSNLGITFNDLYEYVAGLKQAIKTPSEEYAKIGIEKDGKRLQINSNVLQIENELYAPIRPKRVTRSGESPSDALLRGGIEYIEVRSLDINPFSPIGVDEQQVRFLDLFMVWCALADAPEMSSSELACTRVNWNRVILEGRKPGLTLGIGCETAQFPLPQVGKDLFRDLKRVAQTLDSINGGEAYQKVCDELVACFDNPDLTFSARILRSMIDTGIGGTGKAFAEAYRNLLREEPLEILREEDFVAEREASERRQQEMEAADTEPFAVWLEKHA</sequence>
<name>GSH1_ECOLI</name>
<protein>
    <recommendedName>
        <fullName>Glutamate--cysteine ligase</fullName>
        <ecNumber>6.3.2.2</ecNumber>
    </recommendedName>
    <alternativeName>
        <fullName>Gamma-ECS</fullName>
        <shortName>GCS</shortName>
    </alternativeName>
    <alternativeName>
        <fullName>Gamma-glutamylcysteine synthetase</fullName>
    </alternativeName>
</protein>
<proteinExistence type="evidence at protein level"/>
<comment type="catalytic activity">
    <reaction>
        <text>L-cysteine + L-glutamate + ATP = gamma-L-glutamyl-L-cysteine + ADP + phosphate + H(+)</text>
        <dbReference type="Rhea" id="RHEA:13285"/>
        <dbReference type="ChEBI" id="CHEBI:15378"/>
        <dbReference type="ChEBI" id="CHEBI:29985"/>
        <dbReference type="ChEBI" id="CHEBI:30616"/>
        <dbReference type="ChEBI" id="CHEBI:35235"/>
        <dbReference type="ChEBI" id="CHEBI:43474"/>
        <dbReference type="ChEBI" id="CHEBI:58173"/>
        <dbReference type="ChEBI" id="CHEBI:456216"/>
        <dbReference type="EC" id="6.3.2.2"/>
    </reaction>
</comment>
<comment type="pathway">
    <text>Sulfur metabolism; glutathione biosynthesis; glutathione from L-cysteine and L-glutamate: step 1/2.</text>
</comment>
<comment type="similarity">
    <text evidence="1">Belongs to the glutamate--cysteine ligase type 1 family. Type 1 subfamily.</text>
</comment>
<keyword id="KW-0002">3D-structure</keyword>
<keyword id="KW-0067">ATP-binding</keyword>
<keyword id="KW-0317">Glutathione biosynthesis</keyword>
<keyword id="KW-0436">Ligase</keyword>
<keyword id="KW-0547">Nucleotide-binding</keyword>
<keyword id="KW-1185">Reference proteome</keyword>
<feature type="chain" id="PRO_0000192524" description="Glutamate--cysteine ligase">
    <location>
        <begin position="1"/>
        <end position="518"/>
    </location>
</feature>
<feature type="sequence conflict" description="In Ref. 1; CAA27583." evidence="1" ref="1">
    <original>W</original>
    <variation>L</variation>
    <location>
        <position position="100"/>
    </location>
</feature>
<feature type="sequence conflict" description="In Ref. 1; CAA27583." evidence="1" ref="1">
    <original>AS</original>
    <variation>GF</variation>
    <location>
        <begin position="494"/>
        <end position="495"/>
    </location>
</feature>
<feature type="helix" evidence="3">
    <location>
        <begin position="6"/>
        <end position="14"/>
    </location>
</feature>
<feature type="helix" evidence="3">
    <location>
        <begin position="16"/>
        <end position="19"/>
    </location>
</feature>
<feature type="strand" evidence="3">
    <location>
        <begin position="23"/>
        <end position="33"/>
    </location>
</feature>
<feature type="strand" evidence="2">
    <location>
        <begin position="37"/>
        <end position="39"/>
    </location>
</feature>
<feature type="helix" evidence="3">
    <location>
        <begin position="46"/>
        <end position="48"/>
    </location>
</feature>
<feature type="turn" evidence="3">
    <location>
        <begin position="51"/>
        <end position="53"/>
    </location>
</feature>
<feature type="strand" evidence="3">
    <location>
        <begin position="55"/>
        <end position="59"/>
    </location>
</feature>
<feature type="strand" evidence="3">
    <location>
        <begin position="65"/>
        <end position="69"/>
    </location>
</feature>
<feature type="helix" evidence="3">
    <location>
        <begin position="76"/>
        <end position="91"/>
    </location>
</feature>
<feature type="strand" evidence="3">
    <location>
        <begin position="102"/>
        <end position="104"/>
    </location>
</feature>
<feature type="helix" evidence="4">
    <location>
        <begin position="111"/>
        <end position="113"/>
    </location>
</feature>
<feature type="helix" evidence="3">
    <location>
        <begin position="123"/>
        <end position="139"/>
    </location>
</feature>
<feature type="helix" evidence="3">
    <location>
        <begin position="141"/>
        <end position="144"/>
    </location>
</feature>
<feature type="strand" evidence="3">
    <location>
        <begin position="148"/>
        <end position="154"/>
    </location>
</feature>
<feature type="helix" evidence="3">
    <location>
        <begin position="157"/>
        <end position="164"/>
    </location>
</feature>
<feature type="helix" evidence="3">
    <location>
        <begin position="169"/>
        <end position="190"/>
    </location>
</feature>
<feature type="helix" evidence="3">
    <location>
        <begin position="193"/>
        <end position="198"/>
    </location>
</feature>
<feature type="strand" evidence="3">
    <location>
        <begin position="201"/>
        <end position="204"/>
    </location>
</feature>
<feature type="helix" evidence="3">
    <location>
        <begin position="206"/>
        <end position="208"/>
    </location>
</feature>
<feature type="strand" evidence="4">
    <location>
        <begin position="224"/>
        <end position="227"/>
    </location>
</feature>
<feature type="helix" evidence="3">
    <location>
        <begin position="234"/>
        <end position="236"/>
    </location>
</feature>
<feature type="turn" evidence="2">
    <location>
        <begin position="238"/>
        <end position="240"/>
    </location>
</feature>
<feature type="helix" evidence="3">
    <location>
        <begin position="244"/>
        <end position="246"/>
    </location>
</feature>
<feature type="helix" evidence="3">
    <location>
        <begin position="256"/>
        <end position="267"/>
    </location>
</feature>
<feature type="helix" evidence="3">
    <location>
        <begin position="272"/>
        <end position="275"/>
    </location>
</feature>
<feature type="strand" evidence="3">
    <location>
        <begin position="279"/>
        <end position="281"/>
    </location>
</feature>
<feature type="strand" evidence="3">
    <location>
        <begin position="290"/>
        <end position="292"/>
    </location>
</feature>
<feature type="helix" evidence="3">
    <location>
        <begin position="296"/>
        <end position="298"/>
    </location>
</feature>
<feature type="strand" evidence="3">
    <location>
        <begin position="302"/>
        <end position="306"/>
    </location>
</feature>
<feature type="helix" evidence="3">
    <location>
        <begin position="315"/>
        <end position="322"/>
    </location>
</feature>
<feature type="strand" evidence="3">
    <location>
        <begin position="326"/>
        <end position="333"/>
    </location>
</feature>
<feature type="helix" evidence="3">
    <location>
        <begin position="344"/>
        <end position="359"/>
    </location>
</feature>
<feature type="helix" evidence="3">
    <location>
        <begin position="367"/>
        <end position="372"/>
    </location>
</feature>
<feature type="helix" evidence="3">
    <location>
        <begin position="374"/>
        <end position="383"/>
    </location>
</feature>
<feature type="helix" evidence="3">
    <location>
        <begin position="402"/>
        <end position="424"/>
    </location>
</feature>
<feature type="helix" evidence="3">
    <location>
        <begin position="428"/>
        <end position="437"/>
    </location>
</feature>
<feature type="turn" evidence="3">
    <location>
        <begin position="438"/>
        <end position="441"/>
    </location>
</feature>
<feature type="helix" evidence="3">
    <location>
        <begin position="443"/>
        <end position="445"/>
    </location>
</feature>
<feature type="helix" evidence="3">
    <location>
        <begin position="447"/>
        <end position="457"/>
    </location>
</feature>
<feature type="helix" evidence="3">
    <location>
        <begin position="464"/>
        <end position="476"/>
    </location>
</feature>
<feature type="strand" evidence="4">
    <location>
        <begin position="481"/>
        <end position="483"/>
    </location>
</feature>
<feature type="helix" evidence="3">
    <location>
        <begin position="485"/>
        <end position="505"/>
    </location>
</feature>
<feature type="helix" evidence="3">
    <location>
        <begin position="510"/>
        <end position="514"/>
    </location>
</feature>
<feature type="turn" evidence="5">
    <location>
        <begin position="515"/>
        <end position="517"/>
    </location>
</feature>
<evidence type="ECO:0000305" key="1"/>
<evidence type="ECO:0007829" key="2">
    <source>
        <dbReference type="PDB" id="1V4G"/>
    </source>
</evidence>
<evidence type="ECO:0007829" key="3">
    <source>
        <dbReference type="PDB" id="1VA6"/>
    </source>
</evidence>
<evidence type="ECO:0007829" key="4">
    <source>
        <dbReference type="PDB" id="2D32"/>
    </source>
</evidence>
<evidence type="ECO:0007829" key="5">
    <source>
        <dbReference type="PDB" id="2D33"/>
    </source>
</evidence>
<accession>P0A6W9</accession>
<accession>P06980</accession>
<accession>P78228</accession>
<organism>
    <name type="scientific">Escherichia coli (strain K12)</name>
    <dbReference type="NCBI Taxonomy" id="83333"/>
    <lineage>
        <taxon>Bacteria</taxon>
        <taxon>Pseudomonadati</taxon>
        <taxon>Pseudomonadota</taxon>
        <taxon>Gammaproteobacteria</taxon>
        <taxon>Enterobacterales</taxon>
        <taxon>Enterobacteriaceae</taxon>
        <taxon>Escherichia</taxon>
    </lineage>
</organism>